<organism>
    <name type="scientific">Nanoarchaeum equitans (strain Kin4-M)</name>
    <dbReference type="NCBI Taxonomy" id="228908"/>
    <lineage>
        <taxon>Archaea</taxon>
        <taxon>Nanobdellota</taxon>
        <taxon>Candidatus Nanoarchaeia</taxon>
        <taxon>Nanoarchaeales</taxon>
        <taxon>Nanoarchaeaceae</taxon>
        <taxon>Nanoarchaeum</taxon>
    </lineage>
</organism>
<protein>
    <recommendedName>
        <fullName evidence="1">Translation initiation factor 5A</fullName>
    </recommendedName>
    <alternativeName>
        <fullName evidence="1">Hypusine-containing protein</fullName>
    </alternativeName>
    <alternativeName>
        <fullName evidence="1">eIF-5A</fullName>
    </alternativeName>
</protein>
<evidence type="ECO:0000255" key="1">
    <source>
        <dbReference type="HAMAP-Rule" id="MF_00085"/>
    </source>
</evidence>
<evidence type="ECO:0000305" key="2"/>
<feature type="chain" id="PRO_0000259440" description="Translation initiation factor 5A">
    <location>
        <begin position="1"/>
        <end position="144"/>
    </location>
</feature>
<feature type="modified residue" description="Hypusine" evidence="1">
    <location>
        <position position="38"/>
    </location>
</feature>
<comment type="function">
    <text evidence="1">Functions by promoting the formation of the first peptide bond.</text>
</comment>
<comment type="subcellular location">
    <subcellularLocation>
        <location evidence="1">Cytoplasm</location>
    </subcellularLocation>
</comment>
<comment type="similarity">
    <text evidence="1">Belongs to the eIF-5A family.</text>
</comment>
<comment type="sequence caution" evidence="2">
    <conflict type="erroneous initiation">
        <sequence resource="EMBL-CDS" id="AAR39240"/>
    </conflict>
</comment>
<sequence length="144" mass="15892">MEVIVKKVGELKVGNYIYNEQDGEVYKIVSIETSKPGKHGSAKARIEAISVTSGKKIVIIKPTSDPIKVPQIKKIKGQIIATEKRKVPSPQGEVEEVVAQVMDLETYEVIEAKVPEELKDKVEPGANVIVWDLGVPVVMQVFKQ</sequence>
<name>IF5A_NANEQ</name>
<reference key="1">
    <citation type="journal article" date="2003" name="Proc. Natl. Acad. Sci. U.S.A.">
        <title>The genome of Nanoarchaeum equitans: insights into early archaeal evolution and derived parasitism.</title>
        <authorList>
            <person name="Waters E."/>
            <person name="Hohn M.J."/>
            <person name="Ahel I."/>
            <person name="Graham D.E."/>
            <person name="Adams M.D."/>
            <person name="Barnstead M."/>
            <person name="Beeson K.Y."/>
            <person name="Bibbs L."/>
            <person name="Bolanos R."/>
            <person name="Keller M."/>
            <person name="Kretz K."/>
            <person name="Lin X."/>
            <person name="Mathur E."/>
            <person name="Ni J."/>
            <person name="Podar M."/>
            <person name="Richardson T."/>
            <person name="Sutton G.G."/>
            <person name="Simon M."/>
            <person name="Soell D."/>
            <person name="Stetter K.O."/>
            <person name="Short J.M."/>
            <person name="Noorderwier M."/>
        </authorList>
    </citation>
    <scope>NUCLEOTIDE SEQUENCE [LARGE SCALE GENOMIC DNA]</scope>
    <source>
        <strain>Kin4-M</strain>
    </source>
</reference>
<accession>Q74N24</accession>
<proteinExistence type="inferred from homology"/>
<keyword id="KW-0963">Cytoplasm</keyword>
<keyword id="KW-0385">Hypusine</keyword>
<keyword id="KW-0396">Initiation factor</keyword>
<keyword id="KW-0648">Protein biosynthesis</keyword>
<keyword id="KW-1185">Reference proteome</keyword>
<dbReference type="EMBL" id="AE017199">
    <property type="protein sequence ID" value="AAR39240.1"/>
    <property type="status" value="ALT_INIT"/>
    <property type="molecule type" value="Genomic_DNA"/>
</dbReference>
<dbReference type="SMR" id="Q74N24"/>
<dbReference type="STRING" id="228908.NEQ393"/>
<dbReference type="EnsemblBacteria" id="AAR39240">
    <property type="protein sequence ID" value="AAR39240"/>
    <property type="gene ID" value="NEQ393"/>
</dbReference>
<dbReference type="KEGG" id="neq:NEQ393"/>
<dbReference type="PATRIC" id="fig|228908.8.peg.401"/>
<dbReference type="HOGENOM" id="CLU_102600_3_0_2"/>
<dbReference type="Proteomes" id="UP000000578">
    <property type="component" value="Chromosome"/>
</dbReference>
<dbReference type="GO" id="GO:0005737">
    <property type="term" value="C:cytoplasm"/>
    <property type="evidence" value="ECO:0007669"/>
    <property type="project" value="UniProtKB-SubCell"/>
</dbReference>
<dbReference type="GO" id="GO:0043022">
    <property type="term" value="F:ribosome binding"/>
    <property type="evidence" value="ECO:0007669"/>
    <property type="project" value="InterPro"/>
</dbReference>
<dbReference type="GO" id="GO:0003723">
    <property type="term" value="F:RNA binding"/>
    <property type="evidence" value="ECO:0007669"/>
    <property type="project" value="InterPro"/>
</dbReference>
<dbReference type="GO" id="GO:0003746">
    <property type="term" value="F:translation elongation factor activity"/>
    <property type="evidence" value="ECO:0007669"/>
    <property type="project" value="InterPro"/>
</dbReference>
<dbReference type="GO" id="GO:0003743">
    <property type="term" value="F:translation initiation factor activity"/>
    <property type="evidence" value="ECO:0007669"/>
    <property type="project" value="UniProtKB-UniRule"/>
</dbReference>
<dbReference type="GO" id="GO:0045901">
    <property type="term" value="P:positive regulation of translational elongation"/>
    <property type="evidence" value="ECO:0007669"/>
    <property type="project" value="InterPro"/>
</dbReference>
<dbReference type="GO" id="GO:0045905">
    <property type="term" value="P:positive regulation of translational termination"/>
    <property type="evidence" value="ECO:0007669"/>
    <property type="project" value="InterPro"/>
</dbReference>
<dbReference type="Gene3D" id="2.30.30.30">
    <property type="match status" value="1"/>
</dbReference>
<dbReference type="Gene3D" id="2.40.50.140">
    <property type="entry name" value="Nucleic acid-binding proteins"/>
    <property type="match status" value="1"/>
</dbReference>
<dbReference type="HAMAP" id="MF_00085">
    <property type="entry name" value="eIF_5A"/>
    <property type="match status" value="1"/>
</dbReference>
<dbReference type="InterPro" id="IPR001884">
    <property type="entry name" value="IF5A-like"/>
</dbReference>
<dbReference type="InterPro" id="IPR048670">
    <property type="entry name" value="IF5A-like_N"/>
</dbReference>
<dbReference type="InterPro" id="IPR012340">
    <property type="entry name" value="NA-bd_OB-fold"/>
</dbReference>
<dbReference type="InterPro" id="IPR014722">
    <property type="entry name" value="Rib_uL2_dom2"/>
</dbReference>
<dbReference type="InterPro" id="IPR019769">
    <property type="entry name" value="Trans_elong_IF5A_hypusine_site"/>
</dbReference>
<dbReference type="InterPro" id="IPR022847">
    <property type="entry name" value="Transl_elong_IF5A_arc"/>
</dbReference>
<dbReference type="InterPro" id="IPR008991">
    <property type="entry name" value="Translation_prot_SH3-like_sf"/>
</dbReference>
<dbReference type="NCBIfam" id="TIGR00037">
    <property type="entry name" value="eIF_5A"/>
    <property type="match status" value="1"/>
</dbReference>
<dbReference type="NCBIfam" id="NF003076">
    <property type="entry name" value="PRK03999.1"/>
    <property type="match status" value="1"/>
</dbReference>
<dbReference type="PANTHER" id="PTHR11673">
    <property type="entry name" value="TRANSLATION INITIATION FACTOR 5A FAMILY MEMBER"/>
    <property type="match status" value="1"/>
</dbReference>
<dbReference type="Pfam" id="PF21485">
    <property type="entry name" value="IF5A-like_N"/>
    <property type="match status" value="1"/>
</dbReference>
<dbReference type="PIRSF" id="PIRSF003025">
    <property type="entry name" value="eIF5A"/>
    <property type="match status" value="1"/>
</dbReference>
<dbReference type="SUPFAM" id="SSF50104">
    <property type="entry name" value="Translation proteins SH3-like domain"/>
    <property type="match status" value="1"/>
</dbReference>
<dbReference type="PROSITE" id="PS00302">
    <property type="entry name" value="IF5A_HYPUSINE"/>
    <property type="match status" value="1"/>
</dbReference>
<gene>
    <name evidence="1" type="primary">eif5a</name>
    <name type="ordered locus">NEQ393</name>
</gene>